<gene>
    <name evidence="2" type="primary">cbbL</name>
    <name evidence="2" type="synonym">rbcL</name>
    <name type="ordered locus">SYNW1718</name>
</gene>
<sequence length="471" mass="52810">MSKKYDAGVKEYRDTYWTPDYVPLDTDLLACFKCTGQEGVPKEEVAAAVAAESSTGTWSTVWSELLTDLDFYKGRCYRIEDVPGDKESFYAFIAYPLDLFEEGSITNVLTSLVGNVFGFKALRHLRLEDIRFPMAFIKSCYGPPNGIQVERDRMNKYGRPLLGCTIKPKLGLSGKNYGRVVYECLRGGLDFTKDDENINSQPFQRWQNRFEFVAEAIKLSEQETGERKGHYLNVTANTPEEMYERAEFAKELGMPIIMHDFITGGFTANTGLSKWCRKNGMLLHIHRAMHAVIDRHPKHGIHFRVLAKCLRLSGGDQLHTGTVVGKLEGDRQTTLGYIDQLRESFVPEDRSRGNFFDQDWGSMPGVFAVASGGIHVWHMPALVAIFGDDSVLQFGGGTHGHPWGSAAGAAANRVALEACVKARNAGREIEKESRDILMEAGKHSPELAIALETWKEIKFEFDTVDKLDVQN</sequence>
<feature type="chain" id="PRO_0000062653" description="Ribulose bisphosphate carboxylase large chain">
    <location>
        <begin position="1"/>
        <end position="471"/>
    </location>
</feature>
<feature type="active site" description="Proton acceptor" evidence="2">
    <location>
        <position position="167"/>
    </location>
</feature>
<feature type="active site" description="Proton acceptor" evidence="2">
    <location>
        <position position="286"/>
    </location>
</feature>
<feature type="binding site" description="in homodimeric partner" evidence="2">
    <location>
        <position position="115"/>
    </location>
    <ligand>
        <name>substrate</name>
    </ligand>
</feature>
<feature type="binding site" evidence="2">
    <location>
        <position position="165"/>
    </location>
    <ligand>
        <name>substrate</name>
    </ligand>
</feature>
<feature type="binding site" evidence="2">
    <location>
        <position position="169"/>
    </location>
    <ligand>
        <name>substrate</name>
    </ligand>
</feature>
<feature type="binding site" description="via carbamate group" evidence="2">
    <location>
        <position position="193"/>
    </location>
    <ligand>
        <name>Mg(2+)</name>
        <dbReference type="ChEBI" id="CHEBI:18420"/>
    </ligand>
</feature>
<feature type="binding site" evidence="2">
    <location>
        <position position="195"/>
    </location>
    <ligand>
        <name>Mg(2+)</name>
        <dbReference type="ChEBI" id="CHEBI:18420"/>
    </ligand>
</feature>
<feature type="binding site" evidence="2">
    <location>
        <position position="196"/>
    </location>
    <ligand>
        <name>Mg(2+)</name>
        <dbReference type="ChEBI" id="CHEBI:18420"/>
    </ligand>
</feature>
<feature type="binding site" evidence="2">
    <location>
        <position position="287"/>
    </location>
    <ligand>
        <name>substrate</name>
    </ligand>
</feature>
<feature type="binding site" evidence="2">
    <location>
        <position position="319"/>
    </location>
    <ligand>
        <name>substrate</name>
    </ligand>
</feature>
<feature type="binding site" evidence="2">
    <location>
        <position position="371"/>
    </location>
    <ligand>
        <name>substrate</name>
    </ligand>
</feature>
<feature type="site" description="Transition state stabilizer" evidence="2">
    <location>
        <position position="326"/>
    </location>
</feature>
<feature type="modified residue" description="N6-carboxylysine" evidence="2">
    <location>
        <position position="193"/>
    </location>
</feature>
<protein>
    <recommendedName>
        <fullName evidence="2">Ribulose bisphosphate carboxylase large chain</fullName>
        <shortName evidence="2">RuBisCO large subunit</shortName>
        <ecNumber evidence="2">4.1.1.39</ecNumber>
    </recommendedName>
</protein>
<reference key="1">
    <citation type="journal article" date="2003" name="Nature">
        <title>The genome of a motile marine Synechococcus.</title>
        <authorList>
            <person name="Palenik B."/>
            <person name="Brahamsha B."/>
            <person name="Larimer F.W."/>
            <person name="Land M.L."/>
            <person name="Hauser L."/>
            <person name="Chain P."/>
            <person name="Lamerdin J.E."/>
            <person name="Regala W."/>
            <person name="Allen E.E."/>
            <person name="McCarren J."/>
            <person name="Paulsen I.T."/>
            <person name="Dufresne A."/>
            <person name="Partensky F."/>
            <person name="Webb E.A."/>
            <person name="Waterbury J."/>
        </authorList>
    </citation>
    <scope>NUCLEOTIDE SEQUENCE [LARGE SCALE GENOMIC DNA]</scope>
    <source>
        <strain>WH8102</strain>
    </source>
</reference>
<reference key="2">
    <citation type="journal article" date="2019" name="Front. Microbiol.">
        <title>Proteomic Response to Rising Temperature in the Marine Cyanobacterium Synechococcus Grown in Different Nitrogen Sources.</title>
        <authorList>
            <person name="Li Y.Y."/>
            <person name="Chen X.H."/>
            <person name="Xue C."/>
            <person name="Zhang H."/>
            <person name="Sun G."/>
            <person name="Xie Z.X."/>
            <person name="Lin L."/>
            <person name="Wang D.Z."/>
        </authorList>
    </citation>
    <scope>IDENTIFICATION BY MASS SPECTROMETRY</scope>
    <scope>SUBCELLULAR LOCATION</scope>
    <scope>INDUCTION</scope>
    <source>
        <strain>WH8102</strain>
    </source>
</reference>
<organism>
    <name type="scientific">Parasynechococcus marenigrum (strain WH8102)</name>
    <dbReference type="NCBI Taxonomy" id="84588"/>
    <lineage>
        <taxon>Bacteria</taxon>
        <taxon>Bacillati</taxon>
        <taxon>Cyanobacteriota</taxon>
        <taxon>Cyanophyceae</taxon>
        <taxon>Synechococcales</taxon>
        <taxon>Prochlorococcaceae</taxon>
        <taxon>Parasynechococcus</taxon>
        <taxon>Parasynechococcus marenigrum</taxon>
    </lineage>
</organism>
<accession>Q7U5I8</accession>
<keyword id="KW-1283">Bacterial microcompartment</keyword>
<keyword id="KW-0113">Calvin cycle</keyword>
<keyword id="KW-0120">Carbon dioxide fixation</keyword>
<keyword id="KW-1282">Carboxysome</keyword>
<keyword id="KW-0456">Lyase</keyword>
<keyword id="KW-0460">Magnesium</keyword>
<keyword id="KW-0479">Metal-binding</keyword>
<keyword id="KW-0503">Monooxygenase</keyword>
<keyword id="KW-0560">Oxidoreductase</keyword>
<keyword id="KW-0601">Photorespiration</keyword>
<keyword id="KW-0602">Photosynthesis</keyword>
<evidence type="ECO:0000250" key="1">
    <source>
        <dbReference type="UniProtKB" id="P45686"/>
    </source>
</evidence>
<evidence type="ECO:0000255" key="2">
    <source>
        <dbReference type="HAMAP-Rule" id="MF_01338"/>
    </source>
</evidence>
<evidence type="ECO:0000269" key="3">
    <source>
    </source>
</evidence>
<evidence type="ECO:0000305" key="4">
    <source>
    </source>
</evidence>
<name>RBL_PARMW</name>
<proteinExistence type="evidence at protein level"/>
<comment type="function">
    <text evidence="2">RuBisCO catalyzes two reactions: the carboxylation of D-ribulose 1,5-bisphosphate, the primary event in carbon dioxide fixation, as well as the oxidative fragmentation of the pentose substrate in the photorespiration process. Both reactions occur simultaneously and in competition at the same active site.</text>
</comment>
<comment type="catalytic activity">
    <reaction evidence="2 4">
        <text>2 (2R)-3-phosphoglycerate + 2 H(+) = D-ribulose 1,5-bisphosphate + CO2 + H2O</text>
        <dbReference type="Rhea" id="RHEA:23124"/>
        <dbReference type="ChEBI" id="CHEBI:15377"/>
        <dbReference type="ChEBI" id="CHEBI:15378"/>
        <dbReference type="ChEBI" id="CHEBI:16526"/>
        <dbReference type="ChEBI" id="CHEBI:57870"/>
        <dbReference type="ChEBI" id="CHEBI:58272"/>
        <dbReference type="EC" id="4.1.1.39"/>
    </reaction>
</comment>
<comment type="catalytic activity">
    <reaction evidence="2">
        <text>D-ribulose 1,5-bisphosphate + O2 = 2-phosphoglycolate + (2R)-3-phosphoglycerate + 2 H(+)</text>
        <dbReference type="Rhea" id="RHEA:36631"/>
        <dbReference type="ChEBI" id="CHEBI:15378"/>
        <dbReference type="ChEBI" id="CHEBI:15379"/>
        <dbReference type="ChEBI" id="CHEBI:57870"/>
        <dbReference type="ChEBI" id="CHEBI:58033"/>
        <dbReference type="ChEBI" id="CHEBI:58272"/>
    </reaction>
</comment>
<comment type="cofactor">
    <cofactor evidence="2">
        <name>Mg(2+)</name>
        <dbReference type="ChEBI" id="CHEBI:18420"/>
    </cofactor>
    <text evidence="2">Binds 1 Mg(2+) ion per subunit.</text>
</comment>
<comment type="subunit">
    <text evidence="1 2">Heterohexadecamer of 8 large chains and 8 small chains. Forms a CsoS2-CsoS1-RuBisCO complex (By similarity).</text>
</comment>
<comment type="subcellular location">
    <subcellularLocation>
        <location evidence="2 4">Carboxysome</location>
    </subcellularLocation>
    <text>This cyanobacterium makes alpha-type carboxysomes.</text>
</comment>
<comment type="induction">
    <text evidence="3">Cells grown on urea as a nitrogen source have more activity than those grown on nitrate (at protein level). RuBisCO activity of urea- but not nitrate-grown cells decreases with rising temperature (from 25 to 28 degrees Celsius, present versus predicted future ocean temperatures); there is only one RuBisCO in this cyanobacterium.</text>
</comment>
<comment type="miscellaneous">
    <text evidence="2">The basic functional RuBisCO is composed of a large chain homodimer in a 'head-to-tail' conformation. In form I RuBisCO this homodimer is arranged in a barrel-like tetramer with the small subunits forming a tetrameric 'cap' on each end of the 'barrel'.</text>
</comment>
<comment type="similarity">
    <text evidence="2">Belongs to the RuBisCO large chain family. Type I subfamily.</text>
</comment>
<dbReference type="EC" id="4.1.1.39" evidence="2"/>
<dbReference type="EMBL" id="BX569693">
    <property type="protein sequence ID" value="CAE08233.1"/>
    <property type="molecule type" value="Genomic_DNA"/>
</dbReference>
<dbReference type="RefSeq" id="WP_011128579.1">
    <property type="nucleotide sequence ID" value="NC_005070.1"/>
</dbReference>
<dbReference type="SMR" id="Q7U5I8"/>
<dbReference type="STRING" id="84588.SYNW1718"/>
<dbReference type="KEGG" id="syw:SYNW1718"/>
<dbReference type="eggNOG" id="COG1850">
    <property type="taxonomic scope" value="Bacteria"/>
</dbReference>
<dbReference type="HOGENOM" id="CLU_031450_2_0_3"/>
<dbReference type="Proteomes" id="UP000001422">
    <property type="component" value="Chromosome"/>
</dbReference>
<dbReference type="GO" id="GO:0031470">
    <property type="term" value="C:carboxysome"/>
    <property type="evidence" value="ECO:0007669"/>
    <property type="project" value="UniProtKB-SubCell"/>
</dbReference>
<dbReference type="GO" id="GO:0000287">
    <property type="term" value="F:magnesium ion binding"/>
    <property type="evidence" value="ECO:0007669"/>
    <property type="project" value="UniProtKB-UniRule"/>
</dbReference>
<dbReference type="GO" id="GO:0004497">
    <property type="term" value="F:monooxygenase activity"/>
    <property type="evidence" value="ECO:0007669"/>
    <property type="project" value="UniProtKB-KW"/>
</dbReference>
<dbReference type="GO" id="GO:0016984">
    <property type="term" value="F:ribulose-bisphosphate carboxylase activity"/>
    <property type="evidence" value="ECO:0007669"/>
    <property type="project" value="UniProtKB-UniRule"/>
</dbReference>
<dbReference type="GO" id="GO:0009853">
    <property type="term" value="P:photorespiration"/>
    <property type="evidence" value="ECO:0007669"/>
    <property type="project" value="UniProtKB-KW"/>
</dbReference>
<dbReference type="GO" id="GO:0019253">
    <property type="term" value="P:reductive pentose-phosphate cycle"/>
    <property type="evidence" value="ECO:0007669"/>
    <property type="project" value="UniProtKB-UniRule"/>
</dbReference>
<dbReference type="Gene3D" id="3.20.20.110">
    <property type="entry name" value="Ribulose bisphosphate carboxylase, large subunit, C-terminal domain"/>
    <property type="match status" value="1"/>
</dbReference>
<dbReference type="Gene3D" id="3.30.70.150">
    <property type="entry name" value="RuBisCO large subunit, N-terminal domain"/>
    <property type="match status" value="1"/>
</dbReference>
<dbReference type="HAMAP" id="MF_01338">
    <property type="entry name" value="RuBisCO_L_type1"/>
    <property type="match status" value="1"/>
</dbReference>
<dbReference type="InterPro" id="IPR033966">
    <property type="entry name" value="RuBisCO"/>
</dbReference>
<dbReference type="InterPro" id="IPR020878">
    <property type="entry name" value="RuBisCo_large_chain_AS"/>
</dbReference>
<dbReference type="InterPro" id="IPR000685">
    <property type="entry name" value="RuBisCO_lsu_C"/>
</dbReference>
<dbReference type="InterPro" id="IPR036376">
    <property type="entry name" value="RuBisCO_lsu_C_sf"/>
</dbReference>
<dbReference type="InterPro" id="IPR017443">
    <property type="entry name" value="RuBisCO_lsu_fd_N"/>
</dbReference>
<dbReference type="InterPro" id="IPR036422">
    <property type="entry name" value="RuBisCO_lsu_N_sf"/>
</dbReference>
<dbReference type="InterPro" id="IPR020888">
    <property type="entry name" value="RuBisCO_lsuI"/>
</dbReference>
<dbReference type="NCBIfam" id="NF003252">
    <property type="entry name" value="PRK04208.1"/>
    <property type="match status" value="1"/>
</dbReference>
<dbReference type="PANTHER" id="PTHR42704">
    <property type="entry name" value="RIBULOSE BISPHOSPHATE CARBOXYLASE"/>
    <property type="match status" value="1"/>
</dbReference>
<dbReference type="PANTHER" id="PTHR42704:SF17">
    <property type="entry name" value="RIBULOSE BISPHOSPHATE CARBOXYLASE LARGE CHAIN"/>
    <property type="match status" value="1"/>
</dbReference>
<dbReference type="Pfam" id="PF00016">
    <property type="entry name" value="RuBisCO_large"/>
    <property type="match status" value="1"/>
</dbReference>
<dbReference type="Pfam" id="PF02788">
    <property type="entry name" value="RuBisCO_large_N"/>
    <property type="match status" value="1"/>
</dbReference>
<dbReference type="SFLD" id="SFLDG01052">
    <property type="entry name" value="RuBisCO"/>
    <property type="match status" value="1"/>
</dbReference>
<dbReference type="SFLD" id="SFLDS00014">
    <property type="entry name" value="RuBisCO"/>
    <property type="match status" value="1"/>
</dbReference>
<dbReference type="SFLD" id="SFLDG00301">
    <property type="entry name" value="RuBisCO-like_proteins"/>
    <property type="match status" value="1"/>
</dbReference>
<dbReference type="SUPFAM" id="SSF51649">
    <property type="entry name" value="RuBisCo, C-terminal domain"/>
    <property type="match status" value="1"/>
</dbReference>
<dbReference type="SUPFAM" id="SSF54966">
    <property type="entry name" value="RuBisCO, large subunit, small (N-terminal) domain"/>
    <property type="match status" value="1"/>
</dbReference>
<dbReference type="PROSITE" id="PS00157">
    <property type="entry name" value="RUBISCO_LARGE"/>
    <property type="match status" value="1"/>
</dbReference>